<comment type="function">
    <text evidence="1">Catalyzes the reversible oxidation of malate to oxaloacetate.</text>
</comment>
<comment type="catalytic activity">
    <reaction evidence="1">
        <text>(S)-malate + NAD(+) = oxaloacetate + NADH + H(+)</text>
        <dbReference type="Rhea" id="RHEA:21432"/>
        <dbReference type="ChEBI" id="CHEBI:15378"/>
        <dbReference type="ChEBI" id="CHEBI:15589"/>
        <dbReference type="ChEBI" id="CHEBI:16452"/>
        <dbReference type="ChEBI" id="CHEBI:57540"/>
        <dbReference type="ChEBI" id="CHEBI:57945"/>
        <dbReference type="EC" id="1.1.1.37"/>
    </reaction>
</comment>
<comment type="subunit">
    <text evidence="1">Homodimer.</text>
</comment>
<comment type="similarity">
    <text evidence="1">Belongs to the LDH/MDH superfamily. MDH type 1 family.</text>
</comment>
<sequence>MKVAVLGAAGGIGQALALLLKTQLPSGSELSLYDIAPVTPGVAVDLSHIPTAVKIKGFSGEDATPALEGADVVLISAGVARKPGMDRSDLFNVNAGIVKNLVQQVAKTCPKACIGIITNPVNTTVAIAAEVLKKAGVYDKNKLFGVTTLDIIRSNTFVAELKGKQPGEVEVPVIGGHSGVTILPLLSQVPGVSFTEQEVADLTKRIQNAGTEVVEAKAGGGSATLSMGQAAARFGLSLVRALQGEQGVVECAYVEGDGQYARFFSQPLLLGKNGVEERKSIGTLSAFEQNALEGMLDTLKKDIALGEEFVNK</sequence>
<reference key="1">
    <citation type="submission" date="2008-05" db="EMBL/GenBank/DDBJ databases">
        <title>Complete sequence of Shigella boydii serotype 18 strain BS512.</title>
        <authorList>
            <person name="Rasko D.A."/>
            <person name="Rosovitz M."/>
            <person name="Maurelli A.T."/>
            <person name="Myers G."/>
            <person name="Seshadri R."/>
            <person name="Cer R."/>
            <person name="Jiang L."/>
            <person name="Ravel J."/>
            <person name="Sebastian Y."/>
        </authorList>
    </citation>
    <scope>NUCLEOTIDE SEQUENCE [LARGE SCALE GENOMIC DNA]</scope>
    <source>
        <strain>CDC 3083-94 / BS512</strain>
    </source>
</reference>
<name>MDH_SHIB3</name>
<evidence type="ECO:0000255" key="1">
    <source>
        <dbReference type="HAMAP-Rule" id="MF_01516"/>
    </source>
</evidence>
<protein>
    <recommendedName>
        <fullName evidence="1">Malate dehydrogenase</fullName>
        <ecNumber evidence="1">1.1.1.37</ecNumber>
    </recommendedName>
</protein>
<gene>
    <name evidence="1" type="primary">mdh</name>
    <name type="ordered locus">SbBS512_E3540</name>
</gene>
<organism>
    <name type="scientific">Shigella boydii serotype 18 (strain CDC 3083-94 / BS512)</name>
    <dbReference type="NCBI Taxonomy" id="344609"/>
    <lineage>
        <taxon>Bacteria</taxon>
        <taxon>Pseudomonadati</taxon>
        <taxon>Pseudomonadota</taxon>
        <taxon>Gammaproteobacteria</taxon>
        <taxon>Enterobacterales</taxon>
        <taxon>Enterobacteriaceae</taxon>
        <taxon>Shigella</taxon>
    </lineage>
</organism>
<proteinExistence type="inferred from homology"/>
<accession>B2U1U9</accession>
<feature type="chain" id="PRO_1000191599" description="Malate dehydrogenase">
    <location>
        <begin position="1"/>
        <end position="312"/>
    </location>
</feature>
<feature type="active site" description="Proton acceptor" evidence="1">
    <location>
        <position position="177"/>
    </location>
</feature>
<feature type="binding site" evidence="1">
    <location>
        <begin position="7"/>
        <end position="13"/>
    </location>
    <ligand>
        <name>NAD(+)</name>
        <dbReference type="ChEBI" id="CHEBI:57540"/>
    </ligand>
</feature>
<feature type="binding site" evidence="1">
    <location>
        <position position="34"/>
    </location>
    <ligand>
        <name>NAD(+)</name>
        <dbReference type="ChEBI" id="CHEBI:57540"/>
    </ligand>
</feature>
<feature type="binding site" evidence="1">
    <location>
        <position position="81"/>
    </location>
    <ligand>
        <name>substrate</name>
    </ligand>
</feature>
<feature type="binding site" evidence="1">
    <location>
        <position position="87"/>
    </location>
    <ligand>
        <name>substrate</name>
    </ligand>
</feature>
<feature type="binding site" evidence="1">
    <location>
        <position position="94"/>
    </location>
    <ligand>
        <name>NAD(+)</name>
        <dbReference type="ChEBI" id="CHEBI:57540"/>
    </ligand>
</feature>
<feature type="binding site" evidence="1">
    <location>
        <begin position="117"/>
        <end position="119"/>
    </location>
    <ligand>
        <name>NAD(+)</name>
        <dbReference type="ChEBI" id="CHEBI:57540"/>
    </ligand>
</feature>
<feature type="binding site" evidence="1">
    <location>
        <position position="119"/>
    </location>
    <ligand>
        <name>substrate</name>
    </ligand>
</feature>
<feature type="binding site" evidence="1">
    <location>
        <position position="153"/>
    </location>
    <ligand>
        <name>substrate</name>
    </ligand>
</feature>
<feature type="binding site" evidence="1">
    <location>
        <position position="227"/>
    </location>
    <ligand>
        <name>NAD(+)</name>
        <dbReference type="ChEBI" id="CHEBI:57540"/>
    </ligand>
</feature>
<dbReference type="EC" id="1.1.1.37" evidence="1"/>
<dbReference type="EMBL" id="CP001063">
    <property type="protein sequence ID" value="ACD09266.1"/>
    <property type="molecule type" value="Genomic_DNA"/>
</dbReference>
<dbReference type="RefSeq" id="WP_001295272.1">
    <property type="nucleotide sequence ID" value="NC_010658.1"/>
</dbReference>
<dbReference type="SMR" id="B2U1U9"/>
<dbReference type="STRING" id="344609.SbBS512_E3540"/>
<dbReference type="GeneID" id="93778749"/>
<dbReference type="KEGG" id="sbc:SbBS512_E3540"/>
<dbReference type="HOGENOM" id="CLU_047181_0_1_6"/>
<dbReference type="Proteomes" id="UP000001030">
    <property type="component" value="Chromosome"/>
</dbReference>
<dbReference type="GO" id="GO:0005737">
    <property type="term" value="C:cytoplasm"/>
    <property type="evidence" value="ECO:0007669"/>
    <property type="project" value="TreeGrafter"/>
</dbReference>
<dbReference type="GO" id="GO:0030060">
    <property type="term" value="F:L-malate dehydrogenase (NAD+) activity"/>
    <property type="evidence" value="ECO:0007669"/>
    <property type="project" value="UniProtKB-UniRule"/>
</dbReference>
<dbReference type="GO" id="GO:0006108">
    <property type="term" value="P:malate metabolic process"/>
    <property type="evidence" value="ECO:0007669"/>
    <property type="project" value="InterPro"/>
</dbReference>
<dbReference type="GO" id="GO:0006099">
    <property type="term" value="P:tricarboxylic acid cycle"/>
    <property type="evidence" value="ECO:0007669"/>
    <property type="project" value="UniProtKB-UniRule"/>
</dbReference>
<dbReference type="CDD" id="cd01337">
    <property type="entry name" value="MDH_glyoxysomal_mitochondrial"/>
    <property type="match status" value="1"/>
</dbReference>
<dbReference type="FunFam" id="3.40.50.720:FF:000017">
    <property type="entry name" value="Malate dehydrogenase"/>
    <property type="match status" value="1"/>
</dbReference>
<dbReference type="FunFam" id="3.90.110.10:FF:000001">
    <property type="entry name" value="Malate dehydrogenase"/>
    <property type="match status" value="1"/>
</dbReference>
<dbReference type="Gene3D" id="3.90.110.10">
    <property type="entry name" value="Lactate dehydrogenase/glycoside hydrolase, family 4, C-terminal"/>
    <property type="match status" value="1"/>
</dbReference>
<dbReference type="Gene3D" id="3.40.50.720">
    <property type="entry name" value="NAD(P)-binding Rossmann-like Domain"/>
    <property type="match status" value="1"/>
</dbReference>
<dbReference type="HAMAP" id="MF_01516">
    <property type="entry name" value="Malate_dehydrog_1"/>
    <property type="match status" value="1"/>
</dbReference>
<dbReference type="InterPro" id="IPR001557">
    <property type="entry name" value="L-lactate/malate_DH"/>
</dbReference>
<dbReference type="InterPro" id="IPR022383">
    <property type="entry name" value="Lactate/malate_DH_C"/>
</dbReference>
<dbReference type="InterPro" id="IPR001236">
    <property type="entry name" value="Lactate/malate_DH_N"/>
</dbReference>
<dbReference type="InterPro" id="IPR015955">
    <property type="entry name" value="Lactate_DH/Glyco_Ohase_4_C"/>
</dbReference>
<dbReference type="InterPro" id="IPR001252">
    <property type="entry name" value="Malate_DH_AS"/>
</dbReference>
<dbReference type="InterPro" id="IPR010097">
    <property type="entry name" value="Malate_DH_type1"/>
</dbReference>
<dbReference type="InterPro" id="IPR023958">
    <property type="entry name" value="Malate_DH_type1_bac"/>
</dbReference>
<dbReference type="InterPro" id="IPR036291">
    <property type="entry name" value="NAD(P)-bd_dom_sf"/>
</dbReference>
<dbReference type="NCBIfam" id="TIGR01772">
    <property type="entry name" value="MDH_euk_gproteo"/>
    <property type="match status" value="1"/>
</dbReference>
<dbReference type="PANTHER" id="PTHR11540">
    <property type="entry name" value="MALATE AND LACTATE DEHYDROGENASE"/>
    <property type="match status" value="1"/>
</dbReference>
<dbReference type="PANTHER" id="PTHR11540:SF16">
    <property type="entry name" value="MALATE DEHYDROGENASE, MITOCHONDRIAL"/>
    <property type="match status" value="1"/>
</dbReference>
<dbReference type="Pfam" id="PF02866">
    <property type="entry name" value="Ldh_1_C"/>
    <property type="match status" value="1"/>
</dbReference>
<dbReference type="Pfam" id="PF00056">
    <property type="entry name" value="Ldh_1_N"/>
    <property type="match status" value="1"/>
</dbReference>
<dbReference type="PIRSF" id="PIRSF000102">
    <property type="entry name" value="Lac_mal_DH"/>
    <property type="match status" value="1"/>
</dbReference>
<dbReference type="SUPFAM" id="SSF56327">
    <property type="entry name" value="LDH C-terminal domain-like"/>
    <property type="match status" value="1"/>
</dbReference>
<dbReference type="SUPFAM" id="SSF51735">
    <property type="entry name" value="NAD(P)-binding Rossmann-fold domains"/>
    <property type="match status" value="1"/>
</dbReference>
<dbReference type="PROSITE" id="PS00068">
    <property type="entry name" value="MDH"/>
    <property type="match status" value="1"/>
</dbReference>
<keyword id="KW-0520">NAD</keyword>
<keyword id="KW-0560">Oxidoreductase</keyword>
<keyword id="KW-1185">Reference proteome</keyword>
<keyword id="KW-0816">Tricarboxylic acid cycle</keyword>